<sequence>MPCSTEAMEKAGHGHASTPRKRSLSNSSFRLRSESLNTLRLRRIFDLFDKNSDGIITVDELSRALNLLGLETDLSELESTVKSFTREGNIGLQFEDFISLHQSLNDSYFAYGGEDEDDNEEDMRKSILSQEEADSFGGFKVFDEDGDGYISARELQMVLGKLGFSEGSEIDRVEKMIVSVDSNRDGRVDFFEFKDMMRSVLVRSS</sequence>
<comment type="function">
    <text>Could be involved in calcium metabolism in pollen. Binds 3 calcium ions.</text>
</comment>
<comment type="allergen">
    <text>Causes an allergic reaction in human.</text>
</comment>
<protein>
    <recommendedName>
        <fullName>Calcium-binding allergen Bet v 3</fullName>
    </recommendedName>
    <alternativeName>
        <fullName>Allergen Bet v III</fullName>
    </alternativeName>
    <allergenName>Bet v 3</allergenName>
</protein>
<proteinExistence type="evidence at protein level"/>
<gene>
    <name type="primary">BETVIII</name>
</gene>
<reference key="1">
    <citation type="journal article" date="1994" name="EMBO J.">
        <title>Characterization of a birch pollen allergen, Bet v III, representing a novel class of Ca2+ binding proteins: specific expression in mature pollen and dependence of patients' IgE binding on protein-bound Ca2+.</title>
        <authorList>
            <person name="Seiberler S."/>
            <person name="Scheiner O."/>
            <person name="Kraft D."/>
            <person name="Lonsdale D."/>
            <person name="Valenta R."/>
        </authorList>
    </citation>
    <scope>NUCLEOTIDE SEQUENCE [MRNA]</scope>
    <scope>SYNTHESIS OF CALCIUM-BINDING SITES</scope>
    <source>
        <tissue>Pollen</tissue>
    </source>
</reference>
<accession>P43187</accession>
<name>ALLB3_BETPN</name>
<dbReference type="EMBL" id="X79267">
    <property type="protein sequence ID" value="CAA55854.1"/>
    <property type="molecule type" value="mRNA"/>
</dbReference>
<dbReference type="PIR" id="S46233">
    <property type="entry name" value="S46233"/>
</dbReference>
<dbReference type="SMR" id="P43187"/>
<dbReference type="Allergome" id="128">
    <property type="allergen name" value="Bet v 3"/>
</dbReference>
<dbReference type="Allergome" id="3137">
    <property type="allergen name" value="Bet v 3.0101"/>
</dbReference>
<dbReference type="GO" id="GO:0005509">
    <property type="term" value="F:calcium ion binding"/>
    <property type="evidence" value="ECO:0007669"/>
    <property type="project" value="InterPro"/>
</dbReference>
<dbReference type="CDD" id="cd00051">
    <property type="entry name" value="EFh"/>
    <property type="match status" value="2"/>
</dbReference>
<dbReference type="FunFam" id="1.10.238.10:FF:000001">
    <property type="entry name" value="Calmodulin 1"/>
    <property type="match status" value="1"/>
</dbReference>
<dbReference type="Gene3D" id="1.10.238.10">
    <property type="entry name" value="EF-hand"/>
    <property type="match status" value="3"/>
</dbReference>
<dbReference type="InterPro" id="IPR050145">
    <property type="entry name" value="Centrin_CML-like"/>
</dbReference>
<dbReference type="InterPro" id="IPR011992">
    <property type="entry name" value="EF-hand-dom_pair"/>
</dbReference>
<dbReference type="InterPro" id="IPR018247">
    <property type="entry name" value="EF_Hand_1_Ca_BS"/>
</dbReference>
<dbReference type="InterPro" id="IPR002048">
    <property type="entry name" value="EF_hand_dom"/>
</dbReference>
<dbReference type="PANTHER" id="PTHR23050">
    <property type="entry name" value="CALCIUM BINDING PROTEIN"/>
    <property type="match status" value="1"/>
</dbReference>
<dbReference type="Pfam" id="PF13499">
    <property type="entry name" value="EF-hand_7"/>
    <property type="match status" value="2"/>
</dbReference>
<dbReference type="SMART" id="SM00054">
    <property type="entry name" value="EFh"/>
    <property type="match status" value="3"/>
</dbReference>
<dbReference type="SUPFAM" id="SSF47473">
    <property type="entry name" value="EF-hand"/>
    <property type="match status" value="1"/>
</dbReference>
<dbReference type="PROSITE" id="PS00018">
    <property type="entry name" value="EF_HAND_1"/>
    <property type="match status" value="3"/>
</dbReference>
<dbReference type="PROSITE" id="PS50222">
    <property type="entry name" value="EF_HAND_2"/>
    <property type="match status" value="4"/>
</dbReference>
<feature type="chain" id="PRO_0000073662" description="Calcium-binding allergen Bet v 3">
    <location>
        <begin position="1"/>
        <end position="205"/>
    </location>
</feature>
<feature type="domain" description="EF-hand 1" evidence="1">
    <location>
        <begin position="36"/>
        <end position="71"/>
    </location>
</feature>
<feature type="domain" description="EF-hand 2" evidence="1">
    <location>
        <begin position="72"/>
        <end position="107"/>
    </location>
</feature>
<feature type="domain" description="EF-hand 3" evidence="1">
    <location>
        <begin position="130"/>
        <end position="165"/>
    </location>
</feature>
<feature type="domain" description="EF-hand 4" evidence="1">
    <location>
        <begin position="168"/>
        <end position="203"/>
    </location>
</feature>
<feature type="region of interest" description="Disordered" evidence="2">
    <location>
        <begin position="1"/>
        <end position="26"/>
    </location>
</feature>
<feature type="binding site" evidence="1">
    <location>
        <position position="49"/>
    </location>
    <ligand>
        <name>Ca(2+)</name>
        <dbReference type="ChEBI" id="CHEBI:29108"/>
        <label>1</label>
    </ligand>
</feature>
<feature type="binding site" evidence="1">
    <location>
        <position position="51"/>
    </location>
    <ligand>
        <name>Ca(2+)</name>
        <dbReference type="ChEBI" id="CHEBI:29108"/>
        <label>1</label>
    </ligand>
</feature>
<feature type="binding site" evidence="1">
    <location>
        <position position="53"/>
    </location>
    <ligand>
        <name>Ca(2+)</name>
        <dbReference type="ChEBI" id="CHEBI:29108"/>
        <label>1</label>
    </ligand>
</feature>
<feature type="binding site" evidence="1">
    <location>
        <position position="60"/>
    </location>
    <ligand>
        <name>Ca(2+)</name>
        <dbReference type="ChEBI" id="CHEBI:29108"/>
        <label>1</label>
    </ligand>
</feature>
<feature type="binding site" evidence="1">
    <location>
        <position position="143"/>
    </location>
    <ligand>
        <name>Ca(2+)</name>
        <dbReference type="ChEBI" id="CHEBI:29108"/>
        <label>2</label>
    </ligand>
</feature>
<feature type="binding site" evidence="1">
    <location>
        <position position="145"/>
    </location>
    <ligand>
        <name>Ca(2+)</name>
        <dbReference type="ChEBI" id="CHEBI:29108"/>
        <label>2</label>
    </ligand>
</feature>
<feature type="binding site" evidence="1">
    <location>
        <position position="147"/>
    </location>
    <ligand>
        <name>Ca(2+)</name>
        <dbReference type="ChEBI" id="CHEBI:29108"/>
        <label>2</label>
    </ligand>
</feature>
<feature type="binding site" evidence="1">
    <location>
        <position position="149"/>
    </location>
    <ligand>
        <name>Ca(2+)</name>
        <dbReference type="ChEBI" id="CHEBI:29108"/>
        <label>2</label>
    </ligand>
</feature>
<feature type="binding site" evidence="1">
    <location>
        <position position="154"/>
    </location>
    <ligand>
        <name>Ca(2+)</name>
        <dbReference type="ChEBI" id="CHEBI:29108"/>
        <label>2</label>
    </ligand>
</feature>
<feature type="binding site" evidence="1">
    <location>
        <position position="181"/>
    </location>
    <ligand>
        <name>Ca(2+)</name>
        <dbReference type="ChEBI" id="CHEBI:29108"/>
        <label>3</label>
    </ligand>
</feature>
<feature type="binding site" evidence="1">
    <location>
        <position position="183"/>
    </location>
    <ligand>
        <name>Ca(2+)</name>
        <dbReference type="ChEBI" id="CHEBI:29108"/>
        <label>3</label>
    </ligand>
</feature>
<feature type="binding site" evidence="1">
    <location>
        <position position="185"/>
    </location>
    <ligand>
        <name>Ca(2+)</name>
        <dbReference type="ChEBI" id="CHEBI:29108"/>
        <label>3</label>
    </ligand>
</feature>
<feature type="binding site" evidence="1">
    <location>
        <position position="187"/>
    </location>
    <ligand>
        <name>Ca(2+)</name>
        <dbReference type="ChEBI" id="CHEBI:29108"/>
        <label>3</label>
    </ligand>
</feature>
<feature type="binding site" evidence="1">
    <location>
        <position position="192"/>
    </location>
    <ligand>
        <name>Ca(2+)</name>
        <dbReference type="ChEBI" id="CHEBI:29108"/>
        <label>3</label>
    </ligand>
</feature>
<organism>
    <name type="scientific">Betula pendula</name>
    <name type="common">European white birch</name>
    <name type="synonym">Betula verrucosa</name>
    <dbReference type="NCBI Taxonomy" id="3505"/>
    <lineage>
        <taxon>Eukaryota</taxon>
        <taxon>Viridiplantae</taxon>
        <taxon>Streptophyta</taxon>
        <taxon>Embryophyta</taxon>
        <taxon>Tracheophyta</taxon>
        <taxon>Spermatophyta</taxon>
        <taxon>Magnoliopsida</taxon>
        <taxon>eudicotyledons</taxon>
        <taxon>Gunneridae</taxon>
        <taxon>Pentapetalae</taxon>
        <taxon>rosids</taxon>
        <taxon>fabids</taxon>
        <taxon>Fagales</taxon>
        <taxon>Betulaceae</taxon>
        <taxon>Betula</taxon>
    </lineage>
</organism>
<evidence type="ECO:0000255" key="1">
    <source>
        <dbReference type="PROSITE-ProRule" id="PRU00448"/>
    </source>
</evidence>
<evidence type="ECO:0000256" key="2">
    <source>
        <dbReference type="SAM" id="MobiDB-lite"/>
    </source>
</evidence>
<keyword id="KW-0020">Allergen</keyword>
<keyword id="KW-0106">Calcium</keyword>
<keyword id="KW-0479">Metal-binding</keyword>
<keyword id="KW-0677">Repeat</keyword>